<sequence length="673" mass="76226">MSKPFKLNSAFKPSGDQPEAIRRLEEGLEDGLAHQTLLGVTGSGKTFTIANVIADLQRPTMVLAPNKTLAAQLYGEMKEFFPENAVEYFVSYYDYYQPEAYVPSSDTFIEKDASVNEHIEQMRLSATKAMLERRDVVVVASVSAIYGLGDPDLYLKMMLHLTVGMIIDQRAILRRLAELQYARNDQAFQRGTFRVRGEVIDIFPAESDDIALRVELFDEEVERLSLFDPLTGQIVSTIPRFTIYPKTHYVTPRERIVQAMEEIKEELAARRKVLLENNKLLEEQRLTQRTQFDLEMMNELGYCSGIENYSRFLSGRGPGEPPPTLFDYLPADGLLVVDESHVTIPQIGGMYRGDRARKETLVEYGFRLPSALDNRPLKFEEFEALAPQTIYVSATPGNYELEKSGGDVVDQVVRPTGLLDPIIEVRPVATQVDDLLSEIRQRAAINERVLVTTLTKRMAEDLTEYLEEHGERVRYLHSDIDTVERMEIIRDLRLGEFDVLVGINLLREGLDMPEVSLVAILDADKEGFLRSERSLIQTIGRAARNVNGKAILYGDKITPSMAKAIGETERRREKQQKYNEEHGITPQGLNKKVVDILALGQNIAKTKAKGRGKSRPIVEPDNVPMDMSPKALQQKIHELEGLMMQHAQNLEFEEAAQIRDQLHQLRELFIAAS</sequence>
<protein>
    <recommendedName>
        <fullName evidence="1">UvrABC system protein B</fullName>
        <shortName evidence="1">Protein UvrB</shortName>
    </recommendedName>
    <alternativeName>
        <fullName evidence="1">Excinuclease ABC subunit B</fullName>
    </alternativeName>
</protein>
<organism>
    <name type="scientific">Escherichia coli (strain UTI89 / UPEC)</name>
    <dbReference type="NCBI Taxonomy" id="364106"/>
    <lineage>
        <taxon>Bacteria</taxon>
        <taxon>Pseudomonadati</taxon>
        <taxon>Pseudomonadota</taxon>
        <taxon>Gammaproteobacteria</taxon>
        <taxon>Enterobacterales</taxon>
        <taxon>Enterobacteriaceae</taxon>
        <taxon>Escherichia</taxon>
    </lineage>
</organism>
<feature type="chain" id="PRO_1000077891" description="UvrABC system protein B">
    <location>
        <begin position="1"/>
        <end position="673"/>
    </location>
</feature>
<feature type="domain" description="Helicase ATP-binding" evidence="1">
    <location>
        <begin position="26"/>
        <end position="183"/>
    </location>
</feature>
<feature type="domain" description="Helicase C-terminal" evidence="1">
    <location>
        <begin position="431"/>
        <end position="597"/>
    </location>
</feature>
<feature type="domain" description="UVR" evidence="1">
    <location>
        <begin position="633"/>
        <end position="668"/>
    </location>
</feature>
<feature type="region of interest" description="Disordered" evidence="2">
    <location>
        <begin position="608"/>
        <end position="627"/>
    </location>
</feature>
<feature type="short sequence motif" description="Beta-hairpin">
    <location>
        <begin position="92"/>
        <end position="115"/>
    </location>
</feature>
<feature type="binding site" evidence="1">
    <location>
        <begin position="39"/>
        <end position="46"/>
    </location>
    <ligand>
        <name>ATP</name>
        <dbReference type="ChEBI" id="CHEBI:30616"/>
    </ligand>
</feature>
<evidence type="ECO:0000255" key="1">
    <source>
        <dbReference type="HAMAP-Rule" id="MF_00204"/>
    </source>
</evidence>
<evidence type="ECO:0000256" key="2">
    <source>
        <dbReference type="SAM" id="MobiDB-lite"/>
    </source>
</evidence>
<gene>
    <name evidence="1" type="primary">uvrB</name>
    <name type="ordered locus">UTI89_C0777</name>
</gene>
<name>UVRB_ECOUT</name>
<accession>Q1REF1</accession>
<keyword id="KW-0067">ATP-binding</keyword>
<keyword id="KW-0963">Cytoplasm</keyword>
<keyword id="KW-0227">DNA damage</keyword>
<keyword id="KW-0228">DNA excision</keyword>
<keyword id="KW-0234">DNA repair</keyword>
<keyword id="KW-0267">Excision nuclease</keyword>
<keyword id="KW-0347">Helicase</keyword>
<keyword id="KW-0378">Hydrolase</keyword>
<keyword id="KW-0547">Nucleotide-binding</keyword>
<keyword id="KW-0742">SOS response</keyword>
<reference key="1">
    <citation type="journal article" date="2006" name="Proc. Natl. Acad. Sci. U.S.A.">
        <title>Identification of genes subject to positive selection in uropathogenic strains of Escherichia coli: a comparative genomics approach.</title>
        <authorList>
            <person name="Chen S.L."/>
            <person name="Hung C.-S."/>
            <person name="Xu J."/>
            <person name="Reigstad C.S."/>
            <person name="Magrini V."/>
            <person name="Sabo A."/>
            <person name="Blasiar D."/>
            <person name="Bieri T."/>
            <person name="Meyer R.R."/>
            <person name="Ozersky P."/>
            <person name="Armstrong J.R."/>
            <person name="Fulton R.S."/>
            <person name="Latreille J.P."/>
            <person name="Spieth J."/>
            <person name="Hooton T.M."/>
            <person name="Mardis E.R."/>
            <person name="Hultgren S.J."/>
            <person name="Gordon J.I."/>
        </authorList>
    </citation>
    <scope>NUCLEOTIDE SEQUENCE [LARGE SCALE GENOMIC DNA]</scope>
    <source>
        <strain>UTI89 / UPEC</strain>
    </source>
</reference>
<comment type="function">
    <text evidence="1">The UvrABC repair system catalyzes the recognition and processing of DNA lesions. A damage recognition complex composed of 2 UvrA and 2 UvrB subunits scans DNA for abnormalities. Upon binding of the UvrA(2)B(2) complex to a putative damaged site, the DNA wraps around one UvrB monomer. DNA wrap is dependent on ATP binding by UvrB and probably causes local melting of the DNA helix, facilitating insertion of UvrB beta-hairpin between the DNA strands. Then UvrB probes one DNA strand for the presence of a lesion. If a lesion is found the UvrA subunits dissociate and the UvrB-DNA preincision complex is formed. This complex is subsequently bound by UvrC and the second UvrB is released. If no lesion is found, the DNA wraps around the other UvrB subunit that will check the other stand for damage.</text>
</comment>
<comment type="subunit">
    <text evidence="1">Forms a heterotetramer with UvrA during the search for lesions. Interacts with UvrC in an incision complex.</text>
</comment>
<comment type="subcellular location">
    <subcellularLocation>
        <location evidence="1">Cytoplasm</location>
    </subcellularLocation>
</comment>
<comment type="domain">
    <text evidence="1">The beta-hairpin motif is involved in DNA binding.</text>
</comment>
<comment type="similarity">
    <text evidence="1">Belongs to the UvrB family.</text>
</comment>
<proteinExistence type="inferred from homology"/>
<dbReference type="EMBL" id="CP000243">
    <property type="protein sequence ID" value="ABE06263.1"/>
    <property type="molecule type" value="Genomic_DNA"/>
</dbReference>
<dbReference type="RefSeq" id="WP_000042533.1">
    <property type="nucleotide sequence ID" value="NZ_CP064825.1"/>
</dbReference>
<dbReference type="SMR" id="Q1REF1"/>
<dbReference type="GeneID" id="93776651"/>
<dbReference type="KEGG" id="eci:UTI89_C0777"/>
<dbReference type="HOGENOM" id="CLU_009621_2_1_6"/>
<dbReference type="Proteomes" id="UP000001952">
    <property type="component" value="Chromosome"/>
</dbReference>
<dbReference type="GO" id="GO:0005737">
    <property type="term" value="C:cytoplasm"/>
    <property type="evidence" value="ECO:0007669"/>
    <property type="project" value="UniProtKB-SubCell"/>
</dbReference>
<dbReference type="GO" id="GO:0009380">
    <property type="term" value="C:excinuclease repair complex"/>
    <property type="evidence" value="ECO:0007669"/>
    <property type="project" value="InterPro"/>
</dbReference>
<dbReference type="GO" id="GO:0005524">
    <property type="term" value="F:ATP binding"/>
    <property type="evidence" value="ECO:0007669"/>
    <property type="project" value="UniProtKB-UniRule"/>
</dbReference>
<dbReference type="GO" id="GO:0016887">
    <property type="term" value="F:ATP hydrolysis activity"/>
    <property type="evidence" value="ECO:0007669"/>
    <property type="project" value="InterPro"/>
</dbReference>
<dbReference type="GO" id="GO:0003677">
    <property type="term" value="F:DNA binding"/>
    <property type="evidence" value="ECO:0007669"/>
    <property type="project" value="UniProtKB-UniRule"/>
</dbReference>
<dbReference type="GO" id="GO:0009381">
    <property type="term" value="F:excinuclease ABC activity"/>
    <property type="evidence" value="ECO:0007669"/>
    <property type="project" value="UniProtKB-UniRule"/>
</dbReference>
<dbReference type="GO" id="GO:0004386">
    <property type="term" value="F:helicase activity"/>
    <property type="evidence" value="ECO:0007669"/>
    <property type="project" value="UniProtKB-KW"/>
</dbReference>
<dbReference type="GO" id="GO:0006289">
    <property type="term" value="P:nucleotide-excision repair"/>
    <property type="evidence" value="ECO:0007669"/>
    <property type="project" value="UniProtKB-UniRule"/>
</dbReference>
<dbReference type="GO" id="GO:0009432">
    <property type="term" value="P:SOS response"/>
    <property type="evidence" value="ECO:0007669"/>
    <property type="project" value="UniProtKB-UniRule"/>
</dbReference>
<dbReference type="CDD" id="cd17916">
    <property type="entry name" value="DEXHc_UvrB"/>
    <property type="match status" value="1"/>
</dbReference>
<dbReference type="CDD" id="cd18790">
    <property type="entry name" value="SF2_C_UvrB"/>
    <property type="match status" value="1"/>
</dbReference>
<dbReference type="FunFam" id="3.40.50.300:FF:000257">
    <property type="entry name" value="UvrABC system protein B"/>
    <property type="match status" value="1"/>
</dbReference>
<dbReference type="FunFam" id="3.40.50.300:FF:000401">
    <property type="entry name" value="UvrABC system protein B"/>
    <property type="match status" value="1"/>
</dbReference>
<dbReference type="FunFam" id="3.40.50.300:FF:000477">
    <property type="entry name" value="UvrABC system protein B"/>
    <property type="match status" value="1"/>
</dbReference>
<dbReference type="Gene3D" id="3.40.50.300">
    <property type="entry name" value="P-loop containing nucleotide triphosphate hydrolases"/>
    <property type="match status" value="3"/>
</dbReference>
<dbReference type="Gene3D" id="4.10.860.10">
    <property type="entry name" value="UVR domain"/>
    <property type="match status" value="1"/>
</dbReference>
<dbReference type="HAMAP" id="MF_00204">
    <property type="entry name" value="UvrB"/>
    <property type="match status" value="1"/>
</dbReference>
<dbReference type="InterPro" id="IPR006935">
    <property type="entry name" value="Helicase/UvrB_N"/>
</dbReference>
<dbReference type="InterPro" id="IPR014001">
    <property type="entry name" value="Helicase_ATP-bd"/>
</dbReference>
<dbReference type="InterPro" id="IPR001650">
    <property type="entry name" value="Helicase_C-like"/>
</dbReference>
<dbReference type="InterPro" id="IPR027417">
    <property type="entry name" value="P-loop_NTPase"/>
</dbReference>
<dbReference type="InterPro" id="IPR001943">
    <property type="entry name" value="UVR_dom"/>
</dbReference>
<dbReference type="InterPro" id="IPR036876">
    <property type="entry name" value="UVR_dom_sf"/>
</dbReference>
<dbReference type="InterPro" id="IPR004807">
    <property type="entry name" value="UvrB"/>
</dbReference>
<dbReference type="InterPro" id="IPR041471">
    <property type="entry name" value="UvrB_inter"/>
</dbReference>
<dbReference type="InterPro" id="IPR024759">
    <property type="entry name" value="UvrB_YAD/RRR_dom"/>
</dbReference>
<dbReference type="NCBIfam" id="NF003673">
    <property type="entry name" value="PRK05298.1"/>
    <property type="match status" value="1"/>
</dbReference>
<dbReference type="NCBIfam" id="TIGR00631">
    <property type="entry name" value="uvrb"/>
    <property type="match status" value="1"/>
</dbReference>
<dbReference type="PANTHER" id="PTHR24029">
    <property type="entry name" value="UVRABC SYSTEM PROTEIN B"/>
    <property type="match status" value="1"/>
</dbReference>
<dbReference type="PANTHER" id="PTHR24029:SF0">
    <property type="entry name" value="UVRABC SYSTEM PROTEIN B"/>
    <property type="match status" value="1"/>
</dbReference>
<dbReference type="Pfam" id="PF00271">
    <property type="entry name" value="Helicase_C"/>
    <property type="match status" value="1"/>
</dbReference>
<dbReference type="Pfam" id="PF04851">
    <property type="entry name" value="ResIII"/>
    <property type="match status" value="1"/>
</dbReference>
<dbReference type="Pfam" id="PF02151">
    <property type="entry name" value="UVR"/>
    <property type="match status" value="1"/>
</dbReference>
<dbReference type="Pfam" id="PF12344">
    <property type="entry name" value="UvrB"/>
    <property type="match status" value="1"/>
</dbReference>
<dbReference type="Pfam" id="PF17757">
    <property type="entry name" value="UvrB_inter"/>
    <property type="match status" value="1"/>
</dbReference>
<dbReference type="SMART" id="SM00487">
    <property type="entry name" value="DEXDc"/>
    <property type="match status" value="1"/>
</dbReference>
<dbReference type="SMART" id="SM00490">
    <property type="entry name" value="HELICc"/>
    <property type="match status" value="1"/>
</dbReference>
<dbReference type="SUPFAM" id="SSF46600">
    <property type="entry name" value="C-terminal UvrC-binding domain of UvrB"/>
    <property type="match status" value="1"/>
</dbReference>
<dbReference type="SUPFAM" id="SSF52540">
    <property type="entry name" value="P-loop containing nucleoside triphosphate hydrolases"/>
    <property type="match status" value="2"/>
</dbReference>
<dbReference type="PROSITE" id="PS51192">
    <property type="entry name" value="HELICASE_ATP_BIND_1"/>
    <property type="match status" value="1"/>
</dbReference>
<dbReference type="PROSITE" id="PS51194">
    <property type="entry name" value="HELICASE_CTER"/>
    <property type="match status" value="1"/>
</dbReference>
<dbReference type="PROSITE" id="PS50151">
    <property type="entry name" value="UVR"/>
    <property type="match status" value="1"/>
</dbReference>